<feature type="chain" id="PRO_0000169070" description="Uncharacterized protein YecA">
    <location>
        <begin position="1"/>
        <end position="221"/>
    </location>
</feature>
<reference key="1">
    <citation type="journal article" date="2002" name="Nucleic Acids Res.">
        <title>Genome sequence of Shigella flexneri 2a: insights into pathogenicity through comparison with genomes of Escherichia coli K12 and O157.</title>
        <authorList>
            <person name="Jin Q."/>
            <person name="Yuan Z."/>
            <person name="Xu J."/>
            <person name="Wang Y."/>
            <person name="Shen Y."/>
            <person name="Lu W."/>
            <person name="Wang J."/>
            <person name="Liu H."/>
            <person name="Yang J."/>
            <person name="Yang F."/>
            <person name="Zhang X."/>
            <person name="Zhang J."/>
            <person name="Yang G."/>
            <person name="Wu H."/>
            <person name="Qu D."/>
            <person name="Dong J."/>
            <person name="Sun L."/>
            <person name="Xue Y."/>
            <person name="Zhao A."/>
            <person name="Gao Y."/>
            <person name="Zhu J."/>
            <person name="Kan B."/>
            <person name="Ding K."/>
            <person name="Chen S."/>
            <person name="Cheng H."/>
            <person name="Yao Z."/>
            <person name="He B."/>
            <person name="Chen R."/>
            <person name="Ma D."/>
            <person name="Qiang B."/>
            <person name="Wen Y."/>
            <person name="Hou Y."/>
            <person name="Yu J."/>
        </authorList>
    </citation>
    <scope>NUCLEOTIDE SEQUENCE [LARGE SCALE GENOMIC DNA]</scope>
    <source>
        <strain>301 / Serotype 2a</strain>
    </source>
</reference>
<reference key="2">
    <citation type="journal article" date="2003" name="Infect. Immun.">
        <title>Complete genome sequence and comparative genomics of Shigella flexneri serotype 2a strain 2457T.</title>
        <authorList>
            <person name="Wei J."/>
            <person name="Goldberg M.B."/>
            <person name="Burland V."/>
            <person name="Venkatesan M.M."/>
            <person name="Deng W."/>
            <person name="Fournier G."/>
            <person name="Mayhew G.F."/>
            <person name="Plunkett G. III"/>
            <person name="Rose D.J."/>
            <person name="Darling A."/>
            <person name="Mau B."/>
            <person name="Perna N.T."/>
            <person name="Payne S.M."/>
            <person name="Runyen-Janecky L.J."/>
            <person name="Zhou S."/>
            <person name="Schwartz D.C."/>
            <person name="Blattner F.R."/>
        </authorList>
    </citation>
    <scope>NUCLEOTIDE SEQUENCE [LARGE SCALE GENOMIC DNA]</scope>
    <source>
        <strain>ATCC 700930 / 2457T / Serotype 2a</strain>
    </source>
</reference>
<keyword id="KW-1185">Reference proteome</keyword>
<dbReference type="EMBL" id="AE005674">
    <property type="protein sequence ID" value="AAN43505.1"/>
    <property type="molecule type" value="Genomic_DNA"/>
</dbReference>
<dbReference type="EMBL" id="AE014073">
    <property type="protein sequence ID" value="AAP17335.1"/>
    <property type="molecule type" value="Genomic_DNA"/>
</dbReference>
<dbReference type="RefSeq" id="NP_707798.1">
    <property type="nucleotide sequence ID" value="NC_004337.2"/>
</dbReference>
<dbReference type="RefSeq" id="WP_000847902.1">
    <property type="nucleotide sequence ID" value="NZ_WPGW01000033.1"/>
</dbReference>
<dbReference type="SMR" id="P0AD06"/>
<dbReference type="STRING" id="198214.SF1954"/>
<dbReference type="PaxDb" id="198214-SF1954"/>
<dbReference type="GeneID" id="1025148"/>
<dbReference type="GeneID" id="75202689"/>
<dbReference type="KEGG" id="sfl:SF1954"/>
<dbReference type="KEGG" id="sfx:S2047"/>
<dbReference type="PATRIC" id="fig|198214.7.peg.2333"/>
<dbReference type="HOGENOM" id="CLU_078487_0_1_6"/>
<dbReference type="Proteomes" id="UP000001006">
    <property type="component" value="Chromosome"/>
</dbReference>
<dbReference type="Proteomes" id="UP000002673">
    <property type="component" value="Chromosome"/>
</dbReference>
<dbReference type="Gene3D" id="1.20.120.740">
    <property type="entry name" value="YgfB uncharacterised protein family UPF0149, PF03695"/>
    <property type="match status" value="1"/>
</dbReference>
<dbReference type="InterPro" id="IPR004027">
    <property type="entry name" value="SEC_C_motif"/>
</dbReference>
<dbReference type="InterPro" id="IPR011978">
    <property type="entry name" value="YgfB-like"/>
</dbReference>
<dbReference type="InterPro" id="IPR036255">
    <property type="entry name" value="YgfB-like_sf"/>
</dbReference>
<dbReference type="NCBIfam" id="NF007704">
    <property type="entry name" value="PRK10396.1"/>
    <property type="match status" value="1"/>
</dbReference>
<dbReference type="NCBIfam" id="TIGR02292">
    <property type="entry name" value="ygfB_yecA"/>
    <property type="match status" value="1"/>
</dbReference>
<dbReference type="PANTHER" id="PTHR33747:SF9">
    <property type="entry name" value="METAL-BINDING PROTEIN"/>
    <property type="match status" value="1"/>
</dbReference>
<dbReference type="PANTHER" id="PTHR33747">
    <property type="entry name" value="UPF0225 PROTEIN SCO1677"/>
    <property type="match status" value="1"/>
</dbReference>
<dbReference type="Pfam" id="PF02810">
    <property type="entry name" value="SEC-C"/>
    <property type="match status" value="1"/>
</dbReference>
<dbReference type="Pfam" id="PF03695">
    <property type="entry name" value="UPF0149"/>
    <property type="match status" value="1"/>
</dbReference>
<dbReference type="SUPFAM" id="SSF103642">
    <property type="entry name" value="Sec-C motif"/>
    <property type="match status" value="1"/>
</dbReference>
<dbReference type="SUPFAM" id="SSF101327">
    <property type="entry name" value="YgfB-like"/>
    <property type="match status" value="1"/>
</dbReference>
<sequence length="221" mass="25039">MKTGPLNESELEWLDDILTKYNTDHAILDVAELDGLLTAVLSSPQEIEPEQWLVAVWGGADYVPRWASEKEMTRFMNLAFQHMADTAERLNEFPEQFEPLFGLREVDGSELTIVEEWCFGYMRGVALSDWSTLPDSLKPALEAIALHGTEENFERVEKMSPEAFEESVDAIRLAALDLHAYWMAHPQEKAVQQPIKAEEKPGRNDPCPCGSGKKFKQCCLH</sequence>
<accession>P0AD06</accession>
<accession>P06979</accession>
<accession>P76310</accession>
<name>YECA_SHIFL</name>
<organism>
    <name type="scientific">Shigella flexneri</name>
    <dbReference type="NCBI Taxonomy" id="623"/>
    <lineage>
        <taxon>Bacteria</taxon>
        <taxon>Pseudomonadati</taxon>
        <taxon>Pseudomonadota</taxon>
        <taxon>Gammaproteobacteria</taxon>
        <taxon>Enterobacterales</taxon>
        <taxon>Enterobacteriaceae</taxon>
        <taxon>Shigella</taxon>
    </lineage>
</organism>
<protein>
    <recommendedName>
        <fullName>Uncharacterized protein YecA</fullName>
    </recommendedName>
</protein>
<proteinExistence type="predicted"/>
<gene>
    <name type="primary">yecA</name>
    <name type="ordered locus">SF1954</name>
    <name type="ordered locus">S2047</name>
</gene>